<organism>
    <name type="scientific">Shigella flexneri serotype 5b (strain 8401)</name>
    <dbReference type="NCBI Taxonomy" id="373384"/>
    <lineage>
        <taxon>Bacteria</taxon>
        <taxon>Pseudomonadati</taxon>
        <taxon>Pseudomonadota</taxon>
        <taxon>Gammaproteobacteria</taxon>
        <taxon>Enterobacterales</taxon>
        <taxon>Enterobacteriaceae</taxon>
        <taxon>Shigella</taxon>
    </lineage>
</organism>
<sequence length="202" mass="22358">MKALTARQQEVFDLIRDHISQTGMPPTRAEIAQRLGFRSPNAAEEHLKALARKGVIEIVSGASRGIRLLQEEEEGLPLVGRVAAGEPLLAQQHIEGHYQVDPSLFKPNADFLLRVSGMSMKDIGIMDGDLLAVHKTQDVRNGQVVVARIDDEVTVKRLKKQGNKVELLPENSEFKPIVVDLRQQSFTIEGLAVGVIRNGDWL</sequence>
<evidence type="ECO:0000255" key="1">
    <source>
        <dbReference type="HAMAP-Rule" id="MF_00015"/>
    </source>
</evidence>
<gene>
    <name evidence="1" type="primary">lexA</name>
    <name type="ordered locus">SFV_4170</name>
</gene>
<protein>
    <recommendedName>
        <fullName evidence="1">LexA repressor</fullName>
        <ecNumber evidence="1">3.4.21.88</ecNumber>
    </recommendedName>
</protein>
<feature type="chain" id="PRO_1000001345" description="LexA repressor">
    <location>
        <begin position="1"/>
        <end position="202"/>
    </location>
</feature>
<feature type="DNA-binding region" description="H-T-H motif" evidence="1">
    <location>
        <begin position="28"/>
        <end position="48"/>
    </location>
</feature>
<feature type="active site" description="For autocatalytic cleavage activity" evidence="1">
    <location>
        <position position="119"/>
    </location>
</feature>
<feature type="active site" description="For autocatalytic cleavage activity" evidence="1">
    <location>
        <position position="156"/>
    </location>
</feature>
<feature type="site" description="Cleavage; by autolysis" evidence="1">
    <location>
        <begin position="84"/>
        <end position="85"/>
    </location>
</feature>
<dbReference type="EC" id="3.4.21.88" evidence="1"/>
<dbReference type="EMBL" id="CP000266">
    <property type="protein sequence ID" value="ABF06155.1"/>
    <property type="molecule type" value="Genomic_DNA"/>
</dbReference>
<dbReference type="RefSeq" id="WP_000646078.1">
    <property type="nucleotide sequence ID" value="NC_008258.1"/>
</dbReference>
<dbReference type="SMR" id="Q0SXR0"/>
<dbReference type="MEROPS" id="S24.001"/>
<dbReference type="GeneID" id="93777788"/>
<dbReference type="KEGG" id="sfv:SFV_4170"/>
<dbReference type="HOGENOM" id="CLU_066192_45_3_6"/>
<dbReference type="Proteomes" id="UP000000659">
    <property type="component" value="Chromosome"/>
</dbReference>
<dbReference type="GO" id="GO:0003677">
    <property type="term" value="F:DNA binding"/>
    <property type="evidence" value="ECO:0007669"/>
    <property type="project" value="UniProtKB-UniRule"/>
</dbReference>
<dbReference type="GO" id="GO:0004252">
    <property type="term" value="F:serine-type endopeptidase activity"/>
    <property type="evidence" value="ECO:0007669"/>
    <property type="project" value="UniProtKB-UniRule"/>
</dbReference>
<dbReference type="GO" id="GO:0006281">
    <property type="term" value="P:DNA repair"/>
    <property type="evidence" value="ECO:0007669"/>
    <property type="project" value="UniProtKB-UniRule"/>
</dbReference>
<dbReference type="GO" id="GO:0006260">
    <property type="term" value="P:DNA replication"/>
    <property type="evidence" value="ECO:0007669"/>
    <property type="project" value="UniProtKB-UniRule"/>
</dbReference>
<dbReference type="GO" id="GO:0045892">
    <property type="term" value="P:negative regulation of DNA-templated transcription"/>
    <property type="evidence" value="ECO:0007669"/>
    <property type="project" value="UniProtKB-UniRule"/>
</dbReference>
<dbReference type="GO" id="GO:0006508">
    <property type="term" value="P:proteolysis"/>
    <property type="evidence" value="ECO:0007669"/>
    <property type="project" value="InterPro"/>
</dbReference>
<dbReference type="GO" id="GO:0009432">
    <property type="term" value="P:SOS response"/>
    <property type="evidence" value="ECO:0007669"/>
    <property type="project" value="UniProtKB-UniRule"/>
</dbReference>
<dbReference type="CDD" id="cd06529">
    <property type="entry name" value="S24_LexA-like"/>
    <property type="match status" value="1"/>
</dbReference>
<dbReference type="FunFam" id="1.10.10.10:FF:000009">
    <property type="entry name" value="LexA repressor"/>
    <property type="match status" value="1"/>
</dbReference>
<dbReference type="FunFam" id="2.10.109.10:FF:000001">
    <property type="entry name" value="LexA repressor"/>
    <property type="match status" value="1"/>
</dbReference>
<dbReference type="Gene3D" id="2.10.109.10">
    <property type="entry name" value="Umud Fragment, subunit A"/>
    <property type="match status" value="1"/>
</dbReference>
<dbReference type="Gene3D" id="1.10.10.10">
    <property type="entry name" value="Winged helix-like DNA-binding domain superfamily/Winged helix DNA-binding domain"/>
    <property type="match status" value="1"/>
</dbReference>
<dbReference type="HAMAP" id="MF_00015">
    <property type="entry name" value="LexA"/>
    <property type="match status" value="1"/>
</dbReference>
<dbReference type="InterPro" id="IPR006200">
    <property type="entry name" value="LexA"/>
</dbReference>
<dbReference type="InterPro" id="IPR039418">
    <property type="entry name" value="LexA-like"/>
</dbReference>
<dbReference type="InterPro" id="IPR036286">
    <property type="entry name" value="LexA/Signal_pep-like_sf"/>
</dbReference>
<dbReference type="InterPro" id="IPR006199">
    <property type="entry name" value="LexA_DNA-bd_dom"/>
</dbReference>
<dbReference type="InterPro" id="IPR050077">
    <property type="entry name" value="LexA_repressor"/>
</dbReference>
<dbReference type="InterPro" id="IPR006197">
    <property type="entry name" value="Peptidase_S24_LexA"/>
</dbReference>
<dbReference type="InterPro" id="IPR015927">
    <property type="entry name" value="Peptidase_S24_S26A/B/C"/>
</dbReference>
<dbReference type="InterPro" id="IPR036388">
    <property type="entry name" value="WH-like_DNA-bd_sf"/>
</dbReference>
<dbReference type="InterPro" id="IPR036390">
    <property type="entry name" value="WH_DNA-bd_sf"/>
</dbReference>
<dbReference type="NCBIfam" id="TIGR00498">
    <property type="entry name" value="lexA"/>
    <property type="match status" value="1"/>
</dbReference>
<dbReference type="PANTHER" id="PTHR33516">
    <property type="entry name" value="LEXA REPRESSOR"/>
    <property type="match status" value="1"/>
</dbReference>
<dbReference type="PANTHER" id="PTHR33516:SF2">
    <property type="entry name" value="LEXA REPRESSOR-RELATED"/>
    <property type="match status" value="1"/>
</dbReference>
<dbReference type="Pfam" id="PF01726">
    <property type="entry name" value="LexA_DNA_bind"/>
    <property type="match status" value="1"/>
</dbReference>
<dbReference type="Pfam" id="PF00717">
    <property type="entry name" value="Peptidase_S24"/>
    <property type="match status" value="1"/>
</dbReference>
<dbReference type="PRINTS" id="PR00726">
    <property type="entry name" value="LEXASERPTASE"/>
</dbReference>
<dbReference type="SUPFAM" id="SSF51306">
    <property type="entry name" value="LexA/Signal peptidase"/>
    <property type="match status" value="1"/>
</dbReference>
<dbReference type="SUPFAM" id="SSF46785">
    <property type="entry name" value="Winged helix' DNA-binding domain"/>
    <property type="match status" value="1"/>
</dbReference>
<name>LEXA_SHIF8</name>
<accession>Q0SXR0</accession>
<proteinExistence type="inferred from homology"/>
<keyword id="KW-0068">Autocatalytic cleavage</keyword>
<keyword id="KW-0227">DNA damage</keyword>
<keyword id="KW-0234">DNA repair</keyword>
<keyword id="KW-0235">DNA replication</keyword>
<keyword id="KW-0238">DNA-binding</keyword>
<keyword id="KW-0378">Hydrolase</keyword>
<keyword id="KW-0678">Repressor</keyword>
<keyword id="KW-0742">SOS response</keyword>
<keyword id="KW-0804">Transcription</keyword>
<keyword id="KW-0805">Transcription regulation</keyword>
<reference key="1">
    <citation type="journal article" date="2006" name="BMC Genomics">
        <title>Complete genome sequence of Shigella flexneri 5b and comparison with Shigella flexneri 2a.</title>
        <authorList>
            <person name="Nie H."/>
            <person name="Yang F."/>
            <person name="Zhang X."/>
            <person name="Yang J."/>
            <person name="Chen L."/>
            <person name="Wang J."/>
            <person name="Xiong Z."/>
            <person name="Peng J."/>
            <person name="Sun L."/>
            <person name="Dong J."/>
            <person name="Xue Y."/>
            <person name="Xu X."/>
            <person name="Chen S."/>
            <person name="Yao Z."/>
            <person name="Shen Y."/>
            <person name="Jin Q."/>
        </authorList>
    </citation>
    <scope>NUCLEOTIDE SEQUENCE [LARGE SCALE GENOMIC DNA]</scope>
    <source>
        <strain>8401</strain>
    </source>
</reference>
<comment type="function">
    <text evidence="1">Represses a number of genes involved in the response to DNA damage (SOS response), including recA and lexA. Binds to the 16 bp palindromic sequence 5'-CTGTATATATATACAG-3'. In the presence of single-stranded DNA, RecA interacts with LexA causing an autocatalytic cleavage which disrupts the DNA-binding part of LexA, leading to derepression of the SOS regulon and eventually DNA repair.</text>
</comment>
<comment type="catalytic activity">
    <reaction evidence="1">
        <text>Hydrolysis of Ala-|-Gly bond in repressor LexA.</text>
        <dbReference type="EC" id="3.4.21.88"/>
    </reaction>
</comment>
<comment type="subunit">
    <text evidence="1">Homodimer.</text>
</comment>
<comment type="similarity">
    <text evidence="1">Belongs to the peptidase S24 family.</text>
</comment>